<protein>
    <recommendedName>
        <fullName evidence="1">Large ribosomal subunit protein bL20</fullName>
    </recommendedName>
    <alternativeName>
        <fullName evidence="2">50S ribosomal protein L20</fullName>
    </alternativeName>
</protein>
<proteinExistence type="inferred from homology"/>
<comment type="function">
    <text evidence="1">Binds directly to 23S ribosomal RNA and is necessary for the in vitro assembly process of the 50S ribosomal subunit. It is not involved in the protein synthesizing functions of that subunit.</text>
</comment>
<comment type="similarity">
    <text evidence="1">Belongs to the bacterial ribosomal protein bL20 family.</text>
</comment>
<organism>
    <name type="scientific">Campylobacter jejuni subsp. jejuni serotype O:2 (strain ATCC 700819 / NCTC 11168)</name>
    <dbReference type="NCBI Taxonomy" id="192222"/>
    <lineage>
        <taxon>Bacteria</taxon>
        <taxon>Pseudomonadati</taxon>
        <taxon>Campylobacterota</taxon>
        <taxon>Epsilonproteobacteria</taxon>
        <taxon>Campylobacterales</taxon>
        <taxon>Campylobacteraceae</taxon>
        <taxon>Campylobacter</taxon>
    </lineage>
</organism>
<name>RL20_CAMJE</name>
<dbReference type="EMBL" id="AL111168">
    <property type="protein sequence ID" value="CAL34399.1"/>
    <property type="molecule type" value="Genomic_DNA"/>
</dbReference>
<dbReference type="PIR" id="D81442">
    <property type="entry name" value="D81442"/>
</dbReference>
<dbReference type="RefSeq" id="WP_002851731.1">
    <property type="nucleotide sequence ID" value="NZ_SZUC01000006.1"/>
</dbReference>
<dbReference type="RefSeq" id="YP_002343687.1">
    <property type="nucleotide sequence ID" value="NC_002163.1"/>
</dbReference>
<dbReference type="SMR" id="Q9PIQ0"/>
<dbReference type="IntAct" id="Q9PIQ0">
    <property type="interactions" value="7"/>
</dbReference>
<dbReference type="STRING" id="192222.Cj0245"/>
<dbReference type="PaxDb" id="192222-Cj0245"/>
<dbReference type="EnsemblBacteria" id="CAL34399">
    <property type="protein sequence ID" value="CAL34399"/>
    <property type="gene ID" value="Cj0245"/>
</dbReference>
<dbReference type="GeneID" id="904571"/>
<dbReference type="KEGG" id="cje:Cj0245"/>
<dbReference type="PATRIC" id="fig|192222.6.peg.239"/>
<dbReference type="eggNOG" id="COG0292">
    <property type="taxonomic scope" value="Bacteria"/>
</dbReference>
<dbReference type="HOGENOM" id="CLU_123265_0_1_7"/>
<dbReference type="OrthoDB" id="9808966at2"/>
<dbReference type="Proteomes" id="UP000000799">
    <property type="component" value="Chromosome"/>
</dbReference>
<dbReference type="GO" id="GO:1990904">
    <property type="term" value="C:ribonucleoprotein complex"/>
    <property type="evidence" value="ECO:0007669"/>
    <property type="project" value="UniProtKB-KW"/>
</dbReference>
<dbReference type="GO" id="GO:0005840">
    <property type="term" value="C:ribosome"/>
    <property type="evidence" value="ECO:0007669"/>
    <property type="project" value="UniProtKB-KW"/>
</dbReference>
<dbReference type="GO" id="GO:0019843">
    <property type="term" value="F:rRNA binding"/>
    <property type="evidence" value="ECO:0007669"/>
    <property type="project" value="UniProtKB-UniRule"/>
</dbReference>
<dbReference type="GO" id="GO:0003735">
    <property type="term" value="F:structural constituent of ribosome"/>
    <property type="evidence" value="ECO:0007669"/>
    <property type="project" value="InterPro"/>
</dbReference>
<dbReference type="GO" id="GO:0000027">
    <property type="term" value="P:ribosomal large subunit assembly"/>
    <property type="evidence" value="ECO:0007669"/>
    <property type="project" value="UniProtKB-UniRule"/>
</dbReference>
<dbReference type="GO" id="GO:0006412">
    <property type="term" value="P:translation"/>
    <property type="evidence" value="ECO:0007669"/>
    <property type="project" value="InterPro"/>
</dbReference>
<dbReference type="CDD" id="cd07026">
    <property type="entry name" value="Ribosomal_L20"/>
    <property type="match status" value="1"/>
</dbReference>
<dbReference type="FunFam" id="1.10.1900.20:FF:000001">
    <property type="entry name" value="50S ribosomal protein L20"/>
    <property type="match status" value="1"/>
</dbReference>
<dbReference type="Gene3D" id="6.10.160.10">
    <property type="match status" value="1"/>
</dbReference>
<dbReference type="Gene3D" id="1.10.1900.20">
    <property type="entry name" value="Ribosomal protein L20"/>
    <property type="match status" value="1"/>
</dbReference>
<dbReference type="HAMAP" id="MF_00382">
    <property type="entry name" value="Ribosomal_bL20"/>
    <property type="match status" value="1"/>
</dbReference>
<dbReference type="InterPro" id="IPR005813">
    <property type="entry name" value="Ribosomal_bL20"/>
</dbReference>
<dbReference type="InterPro" id="IPR049946">
    <property type="entry name" value="RIBOSOMAL_L20_CS"/>
</dbReference>
<dbReference type="InterPro" id="IPR035566">
    <property type="entry name" value="Ribosomal_protein_bL20_C"/>
</dbReference>
<dbReference type="NCBIfam" id="TIGR01032">
    <property type="entry name" value="rplT_bact"/>
    <property type="match status" value="1"/>
</dbReference>
<dbReference type="PANTHER" id="PTHR10986">
    <property type="entry name" value="39S RIBOSOMAL PROTEIN L20"/>
    <property type="match status" value="1"/>
</dbReference>
<dbReference type="Pfam" id="PF00453">
    <property type="entry name" value="Ribosomal_L20"/>
    <property type="match status" value="1"/>
</dbReference>
<dbReference type="PRINTS" id="PR00062">
    <property type="entry name" value="RIBOSOMALL20"/>
</dbReference>
<dbReference type="SUPFAM" id="SSF74731">
    <property type="entry name" value="Ribosomal protein L20"/>
    <property type="match status" value="1"/>
</dbReference>
<dbReference type="PROSITE" id="PS00937">
    <property type="entry name" value="RIBOSOMAL_L20"/>
    <property type="match status" value="1"/>
</dbReference>
<sequence>MARVKTGVVRRRRHKKVLKLARGFYSGRRKHFRKAKEQLERSLVYAYRDRRRKKRDFRRLWIVRINAACRLNDLSYSRFINGLKKAGIELDRKILADLAMNDAAAFAKIAEAAKKAL</sequence>
<keyword id="KW-1185">Reference proteome</keyword>
<keyword id="KW-0687">Ribonucleoprotein</keyword>
<keyword id="KW-0689">Ribosomal protein</keyword>
<keyword id="KW-0694">RNA-binding</keyword>
<keyword id="KW-0699">rRNA-binding</keyword>
<feature type="chain" id="PRO_0000177137" description="Large ribosomal subunit protein bL20">
    <location>
        <begin position="1"/>
        <end position="117"/>
    </location>
</feature>
<gene>
    <name evidence="1" type="primary">rplT</name>
    <name type="ordered locus">Cj0245</name>
</gene>
<evidence type="ECO:0000255" key="1">
    <source>
        <dbReference type="HAMAP-Rule" id="MF_00382"/>
    </source>
</evidence>
<evidence type="ECO:0000305" key="2"/>
<accession>Q9PIQ0</accession>
<accession>Q0PBR0</accession>
<reference key="1">
    <citation type="journal article" date="2000" name="Nature">
        <title>The genome sequence of the food-borne pathogen Campylobacter jejuni reveals hypervariable sequences.</title>
        <authorList>
            <person name="Parkhill J."/>
            <person name="Wren B.W."/>
            <person name="Mungall K.L."/>
            <person name="Ketley J.M."/>
            <person name="Churcher C.M."/>
            <person name="Basham D."/>
            <person name="Chillingworth T."/>
            <person name="Davies R.M."/>
            <person name="Feltwell T."/>
            <person name="Holroyd S."/>
            <person name="Jagels K."/>
            <person name="Karlyshev A.V."/>
            <person name="Moule S."/>
            <person name="Pallen M.J."/>
            <person name="Penn C.W."/>
            <person name="Quail M.A."/>
            <person name="Rajandream M.A."/>
            <person name="Rutherford K.M."/>
            <person name="van Vliet A.H.M."/>
            <person name="Whitehead S."/>
            <person name="Barrell B.G."/>
        </authorList>
    </citation>
    <scope>NUCLEOTIDE SEQUENCE [LARGE SCALE GENOMIC DNA]</scope>
    <source>
        <strain>ATCC 700819 / NCTC 11168</strain>
    </source>
</reference>